<accession>Q98FL3</accession>
<proteinExistence type="inferred from homology"/>
<keyword id="KW-0997">Cell inner membrane</keyword>
<keyword id="KW-1003">Cell membrane</keyword>
<keyword id="KW-0472">Membrane</keyword>
<keyword id="KW-0592">Phosphate transport</keyword>
<keyword id="KW-0812">Transmembrane</keyword>
<keyword id="KW-1133">Transmembrane helix</keyword>
<keyword id="KW-0813">Transport</keyword>
<dbReference type="EMBL" id="BA000012">
    <property type="protein sequence ID" value="BAB50554.1"/>
    <property type="molecule type" value="Genomic_DNA"/>
</dbReference>
<dbReference type="RefSeq" id="WP_010911900.1">
    <property type="nucleotide sequence ID" value="NC_002678.2"/>
</dbReference>
<dbReference type="KEGG" id="mlo:mll3722"/>
<dbReference type="PATRIC" id="fig|266835.9.peg.2964"/>
<dbReference type="eggNOG" id="COG0573">
    <property type="taxonomic scope" value="Bacteria"/>
</dbReference>
<dbReference type="HOGENOM" id="CLU_033621_1_3_5"/>
<dbReference type="Proteomes" id="UP000000552">
    <property type="component" value="Chromosome"/>
</dbReference>
<dbReference type="GO" id="GO:0005886">
    <property type="term" value="C:plasma membrane"/>
    <property type="evidence" value="ECO:0007669"/>
    <property type="project" value="UniProtKB-SubCell"/>
</dbReference>
<dbReference type="GO" id="GO:0005315">
    <property type="term" value="F:phosphate transmembrane transporter activity"/>
    <property type="evidence" value="ECO:0007669"/>
    <property type="project" value="InterPro"/>
</dbReference>
<dbReference type="GO" id="GO:0006817">
    <property type="term" value="P:phosphate ion transport"/>
    <property type="evidence" value="ECO:0007669"/>
    <property type="project" value="UniProtKB-KW"/>
</dbReference>
<dbReference type="CDD" id="cd06261">
    <property type="entry name" value="TM_PBP2"/>
    <property type="match status" value="1"/>
</dbReference>
<dbReference type="Gene3D" id="1.10.3720.10">
    <property type="entry name" value="MetI-like"/>
    <property type="match status" value="1"/>
</dbReference>
<dbReference type="InterPro" id="IPR000515">
    <property type="entry name" value="MetI-like"/>
</dbReference>
<dbReference type="InterPro" id="IPR035906">
    <property type="entry name" value="MetI-like_sf"/>
</dbReference>
<dbReference type="InterPro" id="IPR011864">
    <property type="entry name" value="Phosphate_PstC"/>
</dbReference>
<dbReference type="InterPro" id="IPR051124">
    <property type="entry name" value="Phosphate_Transport_Permease"/>
</dbReference>
<dbReference type="NCBIfam" id="TIGR02138">
    <property type="entry name" value="phosphate_pstC"/>
    <property type="match status" value="1"/>
</dbReference>
<dbReference type="PANTHER" id="PTHR30425">
    <property type="entry name" value="PHOSPHATE TRANSPORT SYSTEM PERMEASE PROTEIN PST"/>
    <property type="match status" value="1"/>
</dbReference>
<dbReference type="PANTHER" id="PTHR30425:SF1">
    <property type="entry name" value="PHOSPHATE TRANSPORT SYSTEM PERMEASE PROTEIN PSTC"/>
    <property type="match status" value="1"/>
</dbReference>
<dbReference type="Pfam" id="PF00528">
    <property type="entry name" value="BPD_transp_1"/>
    <property type="match status" value="1"/>
</dbReference>
<dbReference type="SUPFAM" id="SSF161098">
    <property type="entry name" value="MetI-like"/>
    <property type="match status" value="1"/>
</dbReference>
<dbReference type="PROSITE" id="PS50928">
    <property type="entry name" value="ABC_TM1"/>
    <property type="match status" value="1"/>
</dbReference>
<sequence length="327" mass="34681">MSAVQEALPAVRSSRDATVRRFALTDAIFHATTRAAAILVLVLLGGVAISLFAGSWQALSTFGFSFLTSESWNPVTEKFGALAPIYGTVITSAIAILIAVPLGIGIAIFLTELCPRPLRRPIGMAVELLAGIPSIIYGIWGLFVLAPFLQTTVQPLIISMFHGIPGLNGLFAGPPYGIGLLTSAMILAIMILPFITSITKDVFDTVPSVLKESAYGIGCTTWEVTRRVVIPYTRIGIMGGVMLALGRALGETMAVTFVIGNAHRISTSLFAPATTISATIANEFTEAVGDLYTSSLVALGLILFVITFLILAIARYMLMRIDARTGA</sequence>
<gene>
    <name type="primary">pstC</name>
    <name type="ordered locus">mll3722</name>
</gene>
<feature type="chain" id="PRO_0000060211" description="Phosphate transport system permease protein PstC">
    <location>
        <begin position="1"/>
        <end position="327"/>
    </location>
</feature>
<feature type="transmembrane region" description="Helical" evidence="2">
    <location>
        <begin position="36"/>
        <end position="56"/>
    </location>
</feature>
<feature type="transmembrane region" description="Helical" evidence="2">
    <location>
        <begin position="89"/>
        <end position="109"/>
    </location>
</feature>
<feature type="transmembrane region" description="Helical" evidence="2">
    <location>
        <begin position="128"/>
        <end position="148"/>
    </location>
</feature>
<feature type="transmembrane region" description="Helical" evidence="2">
    <location>
        <begin position="178"/>
        <end position="198"/>
    </location>
</feature>
<feature type="transmembrane region" description="Helical" evidence="2">
    <location>
        <begin position="235"/>
        <end position="255"/>
    </location>
</feature>
<feature type="transmembrane region" description="Helical" evidence="2">
    <location>
        <begin position="294"/>
        <end position="314"/>
    </location>
</feature>
<feature type="domain" description="ABC transmembrane type-1" evidence="2">
    <location>
        <begin position="85"/>
        <end position="314"/>
    </location>
</feature>
<organism>
    <name type="scientific">Mesorhizobium japonicum (strain LMG 29417 / CECT 9101 / MAFF 303099)</name>
    <name type="common">Mesorhizobium loti (strain MAFF 303099)</name>
    <dbReference type="NCBI Taxonomy" id="266835"/>
    <lineage>
        <taxon>Bacteria</taxon>
        <taxon>Pseudomonadati</taxon>
        <taxon>Pseudomonadota</taxon>
        <taxon>Alphaproteobacteria</taxon>
        <taxon>Hyphomicrobiales</taxon>
        <taxon>Phyllobacteriaceae</taxon>
        <taxon>Mesorhizobium</taxon>
    </lineage>
</organism>
<name>PSTC_RHILO</name>
<reference key="1">
    <citation type="journal article" date="2000" name="DNA Res.">
        <title>Complete genome structure of the nitrogen-fixing symbiotic bacterium Mesorhizobium loti.</title>
        <authorList>
            <person name="Kaneko T."/>
            <person name="Nakamura Y."/>
            <person name="Sato S."/>
            <person name="Asamizu E."/>
            <person name="Kato T."/>
            <person name="Sasamoto S."/>
            <person name="Watanabe A."/>
            <person name="Idesawa K."/>
            <person name="Ishikawa A."/>
            <person name="Kawashima K."/>
            <person name="Kimura T."/>
            <person name="Kishida Y."/>
            <person name="Kiyokawa C."/>
            <person name="Kohara M."/>
            <person name="Matsumoto M."/>
            <person name="Matsuno A."/>
            <person name="Mochizuki Y."/>
            <person name="Nakayama S."/>
            <person name="Nakazaki N."/>
            <person name="Shimpo S."/>
            <person name="Sugimoto M."/>
            <person name="Takeuchi C."/>
            <person name="Yamada M."/>
            <person name="Tabata S."/>
        </authorList>
    </citation>
    <scope>NUCLEOTIDE SEQUENCE [LARGE SCALE GENOMIC DNA]</scope>
    <source>
        <strain>LMG 29417 / CECT 9101 / MAFF 303099</strain>
    </source>
</reference>
<comment type="function">
    <text evidence="1">Part of a binding-protein-dependent transport system for phosphate; probably responsible for the translocation of the substrate across the membrane.</text>
</comment>
<comment type="subcellular location">
    <subcellularLocation>
        <location evidence="1">Cell inner membrane</location>
        <topology evidence="2">Multi-pass membrane protein</topology>
    </subcellularLocation>
</comment>
<comment type="similarity">
    <text evidence="3">Belongs to the binding-protein-dependent transport system permease family. CysTW subfamily.</text>
</comment>
<evidence type="ECO:0000250" key="1"/>
<evidence type="ECO:0000255" key="2">
    <source>
        <dbReference type="PROSITE-ProRule" id="PRU00441"/>
    </source>
</evidence>
<evidence type="ECO:0000305" key="3"/>
<protein>
    <recommendedName>
        <fullName>Phosphate transport system permease protein PstC</fullName>
    </recommendedName>
</protein>